<sequence>MKIAVDAMGGDFAPLEIVKGIEIARDRYDDIDFQLYGTASEVKPLVTNWERIELIPTTEVIEMGDEPVKAMRRKKDSSMVRAALAVKEGHADALFSAGNTGALLSSAIFLVGRIKGVDRPALATALPSFEGEHDQFVFMDLGANADSKPAHLYQYGILGSFYASHVLGIQSPTVRLLNNGAEEDKGDEVHKVAHQLMKNAPSFNFLGNIEARELLEGTADVVVADGFSGNAALKATEGTALMMLKQIKAAIMDSGTRGKMGGALLKPAFKSIQKKLDYNEAGGAVILGVKAPVVKTHGSAKATAVANTMGQIKTMIDQHLVSDIQNYIDTHTEELQAGKEALNAQINA</sequence>
<keyword id="KW-0963">Cytoplasm</keyword>
<keyword id="KW-0444">Lipid biosynthesis</keyword>
<keyword id="KW-0443">Lipid metabolism</keyword>
<keyword id="KW-0594">Phospholipid biosynthesis</keyword>
<keyword id="KW-1208">Phospholipid metabolism</keyword>
<keyword id="KW-1185">Reference proteome</keyword>
<keyword id="KW-0808">Transferase</keyword>
<comment type="function">
    <text evidence="1">Catalyzes the reversible formation of acyl-phosphate (acyl-PO(4)) from acyl-[acyl-carrier-protein] (acyl-ACP). This enzyme utilizes acyl-ACP as fatty acyl donor, but not acyl-CoA.</text>
</comment>
<comment type="catalytic activity">
    <reaction evidence="1">
        <text>a fatty acyl-[ACP] + phosphate = an acyl phosphate + holo-[ACP]</text>
        <dbReference type="Rhea" id="RHEA:42292"/>
        <dbReference type="Rhea" id="RHEA-COMP:9685"/>
        <dbReference type="Rhea" id="RHEA-COMP:14125"/>
        <dbReference type="ChEBI" id="CHEBI:43474"/>
        <dbReference type="ChEBI" id="CHEBI:59918"/>
        <dbReference type="ChEBI" id="CHEBI:64479"/>
        <dbReference type="ChEBI" id="CHEBI:138651"/>
        <dbReference type="EC" id="2.3.1.274"/>
    </reaction>
</comment>
<comment type="pathway">
    <text evidence="1">Lipid metabolism; phospholipid metabolism.</text>
</comment>
<comment type="subunit">
    <text evidence="1">Homodimer. Probably interacts with PlsY.</text>
</comment>
<comment type="subcellular location">
    <subcellularLocation>
        <location evidence="1">Cytoplasm</location>
    </subcellularLocation>
    <text evidence="1">Associated with the membrane possibly through PlsY.</text>
</comment>
<comment type="similarity">
    <text evidence="1">Belongs to the PlsX family.</text>
</comment>
<evidence type="ECO:0000255" key="1">
    <source>
        <dbReference type="HAMAP-Rule" id="MF_00019"/>
    </source>
</evidence>
<accession>B1MXM8</accession>
<reference key="1">
    <citation type="journal article" date="2008" name="J. Bacteriol.">
        <title>Complete genome sequence of Leuconostoc citreum KM20.</title>
        <authorList>
            <person name="Kim J.F."/>
            <person name="Jeong H."/>
            <person name="Lee J.-S."/>
            <person name="Choi S.-H."/>
            <person name="Ha M."/>
            <person name="Hur C.-G."/>
            <person name="Kim J.-S."/>
            <person name="Lee S."/>
            <person name="Park H.-S."/>
            <person name="Park Y.-H."/>
            <person name="Oh T.K."/>
        </authorList>
    </citation>
    <scope>NUCLEOTIDE SEQUENCE [LARGE SCALE GENOMIC DNA]</scope>
    <source>
        <strain>KM20</strain>
    </source>
</reference>
<protein>
    <recommendedName>
        <fullName evidence="1">Phosphate acyltransferase</fullName>
        <ecNumber evidence="1">2.3.1.274</ecNumber>
    </recommendedName>
    <alternativeName>
        <fullName evidence="1">Acyl-ACP phosphotransacylase</fullName>
    </alternativeName>
    <alternativeName>
        <fullName evidence="1">Acyl-[acyl-carrier-protein]--phosphate acyltransferase</fullName>
    </alternativeName>
    <alternativeName>
        <fullName evidence="1">Phosphate-acyl-ACP acyltransferase</fullName>
    </alternativeName>
</protein>
<proteinExistence type="inferred from homology"/>
<organism>
    <name type="scientific">Leuconostoc citreum (strain KM20)</name>
    <dbReference type="NCBI Taxonomy" id="349519"/>
    <lineage>
        <taxon>Bacteria</taxon>
        <taxon>Bacillati</taxon>
        <taxon>Bacillota</taxon>
        <taxon>Bacilli</taxon>
        <taxon>Lactobacillales</taxon>
        <taxon>Lactobacillaceae</taxon>
        <taxon>Leuconostoc</taxon>
    </lineage>
</organism>
<name>PLSX_LEUCK</name>
<dbReference type="EC" id="2.3.1.274" evidence="1"/>
<dbReference type="EMBL" id="DQ489736">
    <property type="protein sequence ID" value="ACA82280.1"/>
    <property type="molecule type" value="Genomic_DNA"/>
</dbReference>
<dbReference type="RefSeq" id="WP_004903191.1">
    <property type="nucleotide sequence ID" value="NC_010471.1"/>
</dbReference>
<dbReference type="SMR" id="B1MXM8"/>
<dbReference type="STRING" id="349519.LCK_00447"/>
<dbReference type="GeneID" id="61102620"/>
<dbReference type="KEGG" id="lci:LCK_00447"/>
<dbReference type="eggNOG" id="COG0416">
    <property type="taxonomic scope" value="Bacteria"/>
</dbReference>
<dbReference type="HOGENOM" id="CLU_039379_1_1_9"/>
<dbReference type="OrthoDB" id="9806408at2"/>
<dbReference type="UniPathway" id="UPA00085"/>
<dbReference type="Proteomes" id="UP000002166">
    <property type="component" value="Chromosome"/>
</dbReference>
<dbReference type="GO" id="GO:0005737">
    <property type="term" value="C:cytoplasm"/>
    <property type="evidence" value="ECO:0007669"/>
    <property type="project" value="UniProtKB-SubCell"/>
</dbReference>
<dbReference type="GO" id="GO:0043811">
    <property type="term" value="F:phosphate:acyl-[acyl carrier protein] acyltransferase activity"/>
    <property type="evidence" value="ECO:0007669"/>
    <property type="project" value="UniProtKB-UniRule"/>
</dbReference>
<dbReference type="GO" id="GO:0006633">
    <property type="term" value="P:fatty acid biosynthetic process"/>
    <property type="evidence" value="ECO:0007669"/>
    <property type="project" value="UniProtKB-UniRule"/>
</dbReference>
<dbReference type="GO" id="GO:0008654">
    <property type="term" value="P:phospholipid biosynthetic process"/>
    <property type="evidence" value="ECO:0007669"/>
    <property type="project" value="UniProtKB-KW"/>
</dbReference>
<dbReference type="Gene3D" id="3.40.718.10">
    <property type="entry name" value="Isopropylmalate Dehydrogenase"/>
    <property type="match status" value="1"/>
</dbReference>
<dbReference type="HAMAP" id="MF_00019">
    <property type="entry name" value="PlsX"/>
    <property type="match status" value="1"/>
</dbReference>
<dbReference type="InterPro" id="IPR003664">
    <property type="entry name" value="FA_synthesis"/>
</dbReference>
<dbReference type="InterPro" id="IPR012281">
    <property type="entry name" value="Phospholipid_synth_PlsX-like"/>
</dbReference>
<dbReference type="NCBIfam" id="TIGR00182">
    <property type="entry name" value="plsX"/>
    <property type="match status" value="1"/>
</dbReference>
<dbReference type="PANTHER" id="PTHR30100">
    <property type="entry name" value="FATTY ACID/PHOSPHOLIPID SYNTHESIS PROTEIN PLSX"/>
    <property type="match status" value="1"/>
</dbReference>
<dbReference type="PANTHER" id="PTHR30100:SF1">
    <property type="entry name" value="PHOSPHATE ACYLTRANSFERASE"/>
    <property type="match status" value="1"/>
</dbReference>
<dbReference type="Pfam" id="PF02504">
    <property type="entry name" value="FA_synthesis"/>
    <property type="match status" value="1"/>
</dbReference>
<dbReference type="PIRSF" id="PIRSF002465">
    <property type="entry name" value="Phsphlp_syn_PlsX"/>
    <property type="match status" value="1"/>
</dbReference>
<dbReference type="SUPFAM" id="SSF53659">
    <property type="entry name" value="Isocitrate/Isopropylmalate dehydrogenase-like"/>
    <property type="match status" value="1"/>
</dbReference>
<feature type="chain" id="PRO_1000089921" description="Phosphate acyltransferase">
    <location>
        <begin position="1"/>
        <end position="348"/>
    </location>
</feature>
<gene>
    <name evidence="1" type="primary">plsX</name>
    <name type="ordered locus">LCK_00447</name>
</gene>